<sequence length="340" mass="36538">MANPLISNHHGKNGKYTQAFLEQNGPGDARPTALDILKDNDRIDSMKDKVFLLTGSSGGIGIETGRALAATGGKVYLGVRDLEKGKQALEEILEPGRVELLELDIGSMESVRTAAKTFLSKSTQLNVLVNNAGIMACSEAKTADGFESQLAINYLGHFLLYKLLEQTLLSSSTPEFQSRVVNVSSAGHHMSSVVLDNINLEGEYEEWKAYGNAKTACIWMTNEIEHRYGSKGLHGLSLMPGGIATGLQRHVDPETLKQWGSSEPAQKYGKSSAQGAATTITAAFGKEWEGKGGVYLEDCQEAGPVPEGGTLAVGVAPHAFDPEGEKKLWDLSLKMLDLSE</sequence>
<dbReference type="EC" id="1.1.99.-" evidence="10"/>
<dbReference type="EMBL" id="AM920427">
    <property type="protein sequence ID" value="CAP80257.1"/>
    <property type="molecule type" value="Genomic_DNA"/>
</dbReference>
<dbReference type="RefSeq" id="XP_002557472.1">
    <property type="nucleotide sequence ID" value="XM_002557426.1"/>
</dbReference>
<dbReference type="SMR" id="B6H062"/>
<dbReference type="STRING" id="500485.B6H062"/>
<dbReference type="GeneID" id="8306670"/>
<dbReference type="KEGG" id="pcs:N7525_001921"/>
<dbReference type="VEuPathDB" id="FungiDB:PCH_Pc12g06300"/>
<dbReference type="eggNOG" id="KOG1208">
    <property type="taxonomic scope" value="Eukaryota"/>
</dbReference>
<dbReference type="HOGENOM" id="CLU_010194_44_0_1"/>
<dbReference type="OMA" id="AKTACIW"/>
<dbReference type="OrthoDB" id="191139at2759"/>
<dbReference type="BioCyc" id="PCHR:PC12G06300-MONOMER"/>
<dbReference type="Proteomes" id="UP000000724">
    <property type="component" value="Contig Pc00c12"/>
</dbReference>
<dbReference type="GO" id="GO:0016491">
    <property type="term" value="F:oxidoreductase activity"/>
    <property type="evidence" value="ECO:0007669"/>
    <property type="project" value="UniProtKB-KW"/>
</dbReference>
<dbReference type="Gene3D" id="3.40.50.720">
    <property type="entry name" value="NAD(P)-binding Rossmann-like Domain"/>
    <property type="match status" value="1"/>
</dbReference>
<dbReference type="InterPro" id="IPR036291">
    <property type="entry name" value="NAD(P)-bd_dom_sf"/>
</dbReference>
<dbReference type="InterPro" id="IPR002347">
    <property type="entry name" value="SDR_fam"/>
</dbReference>
<dbReference type="PANTHER" id="PTHR24320:SF272">
    <property type="entry name" value="NAD(P)-BINDING ROSSMANN-FOLD SUPERFAMILY PROTEIN"/>
    <property type="match status" value="1"/>
</dbReference>
<dbReference type="PANTHER" id="PTHR24320">
    <property type="entry name" value="RETINOL DEHYDROGENASE"/>
    <property type="match status" value="1"/>
</dbReference>
<dbReference type="Pfam" id="PF00106">
    <property type="entry name" value="adh_short"/>
    <property type="match status" value="1"/>
</dbReference>
<dbReference type="PRINTS" id="PR00081">
    <property type="entry name" value="GDHRDH"/>
</dbReference>
<dbReference type="SUPFAM" id="SSF51735">
    <property type="entry name" value="NAD(P)-binding Rossmann-fold domains"/>
    <property type="match status" value="1"/>
</dbReference>
<accession>B6H062</accession>
<proteinExistence type="evidence at transcript level"/>
<evidence type="ECO:0000250" key="1">
    <source>
        <dbReference type="UniProtKB" id="L0E2Z4"/>
    </source>
</evidence>
<evidence type="ECO:0000250" key="2">
    <source>
        <dbReference type="UniProtKB" id="O93868"/>
    </source>
</evidence>
<evidence type="ECO:0000250" key="3">
    <source>
        <dbReference type="UniProtKB" id="W6Q3Z9"/>
    </source>
</evidence>
<evidence type="ECO:0000250" key="4">
    <source>
        <dbReference type="UniProtKB" id="W6QB15"/>
    </source>
</evidence>
<evidence type="ECO:0000250" key="5">
    <source>
        <dbReference type="UniProtKB" id="W6QP10"/>
    </source>
</evidence>
<evidence type="ECO:0000255" key="6">
    <source>
        <dbReference type="PROSITE-ProRule" id="PRU10001"/>
    </source>
</evidence>
<evidence type="ECO:0000269" key="7">
    <source>
    </source>
</evidence>
<evidence type="ECO:0000303" key="8">
    <source>
    </source>
</evidence>
<evidence type="ECO:0000305" key="9"/>
<evidence type="ECO:0000305" key="10">
    <source>
    </source>
</evidence>
<gene>
    <name evidence="8" type="primary">prx1</name>
    <name type="ORF">Pc12g06300</name>
    <name type="ORF">PCH_Pc12g06300</name>
</gene>
<protein>
    <recommendedName>
        <fullName evidence="8">Short-chain dehydrogenase/reductase prx1</fullName>
        <ecNumber evidence="10">1.1.99.-</ecNumber>
    </recommendedName>
    <alternativeName>
        <fullName evidence="8">PR-toxin biosynthesis cluster protein 1</fullName>
    </alternativeName>
</protein>
<feature type="chain" id="PRO_0000451215" description="Short-chain dehydrogenase/reductase prx1">
    <location>
        <begin position="1"/>
        <end position="340"/>
    </location>
</feature>
<feature type="active site" description="Proton donor" evidence="2">
    <location>
        <position position="184"/>
    </location>
</feature>
<feature type="active site" description="Proton acceptor" evidence="6">
    <location>
        <position position="210"/>
    </location>
</feature>
<feature type="active site" description="Lowers pKa of active site Tyr" evidence="2">
    <location>
        <position position="214"/>
    </location>
</feature>
<feature type="binding site" evidence="1">
    <location>
        <position position="60"/>
    </location>
    <ligand>
        <name>NADP(+)</name>
        <dbReference type="ChEBI" id="CHEBI:58349"/>
    </ligand>
</feature>
<feature type="binding site" evidence="1">
    <location>
        <position position="84"/>
    </location>
    <ligand>
        <name>NADP(+)</name>
        <dbReference type="ChEBI" id="CHEBI:58349"/>
    </ligand>
</feature>
<feature type="binding site" evidence="1">
    <location>
        <position position="104"/>
    </location>
    <ligand>
        <name>NADP(+)</name>
        <dbReference type="ChEBI" id="CHEBI:58349"/>
    </ligand>
</feature>
<feature type="binding site" evidence="2">
    <location>
        <position position="131"/>
    </location>
    <ligand>
        <name>NADP(+)</name>
        <dbReference type="ChEBI" id="CHEBI:58349"/>
    </ligand>
</feature>
<feature type="binding site" evidence="1">
    <location>
        <position position="162"/>
    </location>
    <ligand>
        <name>NADP(+)</name>
        <dbReference type="ChEBI" id="CHEBI:58349"/>
    </ligand>
</feature>
<feature type="binding site" evidence="2">
    <location>
        <position position="210"/>
    </location>
    <ligand>
        <name>NADP(+)</name>
        <dbReference type="ChEBI" id="CHEBI:58349"/>
    </ligand>
</feature>
<feature type="binding site" evidence="2">
    <location>
        <position position="214"/>
    </location>
    <ligand>
        <name>NADP(+)</name>
        <dbReference type="ChEBI" id="CHEBI:58349"/>
    </ligand>
</feature>
<comment type="function">
    <text evidence="3 4 5 7">Short-chain dehydrogenase/reductase; part of the gene cluster that mediates the biosynthesis of PR-toxin, a bicyclic sesquiterpene belonging to the eremophilane class and acting as a mycotoxin (PubMed:24239699). The first step of the pathway is catalyzed by the aristolochene synthase which performs the cyclization of trans,trans-farnesyl diphosphate (FPP) to the bicyclic sesquiterpene aristolochene (PubMed:24239699). Following the formation of aristolochene, the non-oxygenated aristolochene is converted to the trioxygenated intermediate eremofortin B, via 7-epi-neopetasone (PubMed:24239699). This conversion appears to involve three enzymes, a hydroxysterol oxidase-like enzyme, the quinone-oxidase prx3 that forms the quinone-type-structure in the bicyclic nucleus of aristolochene with the C8-oxo group and the C-3 hydroxyl group, and the P450 monooxygenase prx9 that introduces the epoxide at the double bond between carbons 1 and 2 (By similarity) (PubMed:24239699). No monoxy or dioxy-intermediates have been reported to be released to the broth, so these three early oxidative reactions may be coupled together (PubMed:24239699). Eremofortin B is further oxidized by another P450 monooxygenase, that introduces a second epoxide between carbons 7 and 11 prior to acetylation to eremofortin A by the acetyltransferase prx11 (By similarity). The second epoxidation may be performed by a second P450 monooxygenase (PubMed:24239699). After the acetylation step, eremofortin A is converted to eremofortin C and then to PR-toxin (PubMed:24239699). First the conversion of eremofortin A to eremofortin C proceeds by oxidation of the side chain of the molecule at C-12 and is catalyzed by the short-chain oxidoreductase prx1 (PubMed:24239699). The cytochrome P450 monooxygenase prx8 also plays a role in this step (By similarity). The primary alcohol formed at C-12 is finally oxidized by the short-chain alcohol dehydrogenase prx4 that forms PR-toxin (PubMed:24239699).</text>
</comment>
<comment type="pathway">
    <text evidence="7">Sesquiterpene biosynthesis.</text>
</comment>
<comment type="induction">
    <text evidence="7">Expression and the subsequent production of PR-toxin take place under static culture conditions (oxygen limited), whereas no expression of the PR-toxin genes occurs under the strongly aerated conditions required for optimal penicillin production (PubMed:24239699). There is a negative control of the transcription of the PR-toxin genes by the penicillin biosynthesis gene product(s), or by a regulatory peptide encoded by a small ORF inside the penicillin gene cluster (PubMed:24239699).</text>
</comment>
<comment type="similarity">
    <text evidence="9">Belongs to the short-chain dehydrogenases/reductases (SDR) family.</text>
</comment>
<keyword id="KW-0521">NADP</keyword>
<keyword id="KW-0560">Oxidoreductase</keyword>
<keyword id="KW-1185">Reference proteome</keyword>
<name>PRX1_PENRW</name>
<reference key="1">
    <citation type="journal article" date="2008" name="Nat. Biotechnol.">
        <title>Genome sequencing and analysis of the filamentous fungus Penicillium chrysogenum.</title>
        <authorList>
            <person name="van den Berg M.A."/>
            <person name="Albang R."/>
            <person name="Albermann K."/>
            <person name="Badger J.H."/>
            <person name="Daran J.-M."/>
            <person name="Driessen A.J.M."/>
            <person name="Garcia-Estrada C."/>
            <person name="Fedorova N.D."/>
            <person name="Harris D.M."/>
            <person name="Heijne W.H.M."/>
            <person name="Joardar V.S."/>
            <person name="Kiel J.A.K.W."/>
            <person name="Kovalchuk A."/>
            <person name="Martin J.F."/>
            <person name="Nierman W.C."/>
            <person name="Nijland J.G."/>
            <person name="Pronk J.T."/>
            <person name="Roubos J.A."/>
            <person name="van der Klei I.J."/>
            <person name="van Peij N.N.M.E."/>
            <person name="Veenhuis M."/>
            <person name="von Doehren H."/>
            <person name="Wagner C."/>
            <person name="Wortman J.R."/>
            <person name="Bovenberg R.A.L."/>
        </authorList>
    </citation>
    <scope>NUCLEOTIDE SEQUENCE [LARGE SCALE GENOMIC DNA]</scope>
    <source>
        <strain>ATCC 28089 / DSM 1075 / NRRL 1951 / Wisconsin 54-1255</strain>
    </source>
</reference>
<reference key="2">
    <citation type="journal article" date="2014" name="Fungal Genet. Biol.">
        <title>Molecular characterization of the PR-toxin gene cluster in Penicillium roqueforti and Penicillium chrysogenum: cross talk of secondary metabolite pathways.</title>
        <authorList>
            <person name="Hidalgo P.I."/>
            <person name="Ullan R.V."/>
            <person name="Albillos S.M."/>
            <person name="Montero O."/>
            <person name="Fernandez-Bodega M.A."/>
            <person name="Garcia-Estrada C."/>
            <person name="Fernandez-Aguado M."/>
            <person name="Martin J.F."/>
        </authorList>
    </citation>
    <scope>FUNCTION</scope>
    <scope>INDUCTION</scope>
    <scope>PATHWAY</scope>
</reference>
<organism>
    <name type="scientific">Penicillium rubens (strain ATCC 28089 / DSM 1075 / NRRL 1951 / Wisconsin 54-1255)</name>
    <name type="common">Penicillium chrysogenum</name>
    <dbReference type="NCBI Taxonomy" id="500485"/>
    <lineage>
        <taxon>Eukaryota</taxon>
        <taxon>Fungi</taxon>
        <taxon>Dikarya</taxon>
        <taxon>Ascomycota</taxon>
        <taxon>Pezizomycotina</taxon>
        <taxon>Eurotiomycetes</taxon>
        <taxon>Eurotiomycetidae</taxon>
        <taxon>Eurotiales</taxon>
        <taxon>Aspergillaceae</taxon>
        <taxon>Penicillium</taxon>
        <taxon>Penicillium chrysogenum species complex</taxon>
    </lineage>
</organism>